<feature type="chain" id="PRO_0000165913" description="Dihydropyrimidinase-related protein 2">
    <location>
        <begin position="1"/>
        <end position="572"/>
    </location>
</feature>
<feature type="region of interest" description="Disordered" evidence="5">
    <location>
        <begin position="512"/>
        <end position="537"/>
    </location>
</feature>
<feature type="compositionally biased region" description="Polar residues" evidence="5">
    <location>
        <begin position="512"/>
        <end position="525"/>
    </location>
</feature>
<feature type="modified residue" description="Phosphotyrosine; by FYN" evidence="14">
    <location>
        <position position="32"/>
    </location>
</feature>
<feature type="modified residue" description="N6-succinyllysine" evidence="3">
    <location>
        <position position="258"/>
    </location>
</feature>
<feature type="modified residue" description="Phosphoserine" evidence="4">
    <location>
        <position position="259"/>
    </location>
</feature>
<feature type="modified residue" description="Phosphotyrosine" evidence="3">
    <location>
        <position position="431"/>
    </location>
</feature>
<feature type="modified residue" description="Phosphoserine" evidence="3">
    <location>
        <position position="465"/>
    </location>
</feature>
<feature type="modified residue" description="Phosphotyrosine" evidence="3">
    <location>
        <position position="499"/>
    </location>
</feature>
<feature type="modified residue" description="S-nitrosocysteine" evidence="4">
    <location>
        <position position="504"/>
    </location>
</feature>
<feature type="modified residue" description="Phosphoserine" evidence="3">
    <location>
        <position position="507"/>
    </location>
</feature>
<feature type="modified residue" description="Phosphothreonine" evidence="6 18 19 20 21">
    <location>
        <position position="509"/>
    </location>
</feature>
<feature type="modified residue" description="Phosphothreonine" evidence="3">
    <location>
        <position position="512"/>
    </location>
</feature>
<feature type="modified residue" description="Phosphothreonine; by GSK3-beta" evidence="20">
    <location>
        <position position="514"/>
    </location>
</feature>
<feature type="modified residue" description="Phosphoserine" evidence="20">
    <location>
        <position position="517"/>
    </location>
</feature>
<feature type="modified residue" description="Phosphoserine" evidence="6 20">
    <location>
        <position position="518"/>
    </location>
</feature>
<feature type="modified residue" description="Phosphothreonine" evidence="3">
    <location>
        <position position="521"/>
    </location>
</feature>
<feature type="modified residue" description="Phosphoserine; by DYRK2" evidence="6 9 18 20">
    <location>
        <position position="522"/>
    </location>
</feature>
<feature type="modified residue" description="Phosphoserine" evidence="3">
    <location>
        <position position="537"/>
    </location>
</feature>
<feature type="modified residue" description="Phosphoserine" evidence="3">
    <location>
        <position position="540"/>
    </location>
</feature>
<feature type="modified residue" description="Phosphoserine" evidence="3">
    <location>
        <position position="542"/>
    </location>
</feature>
<feature type="modified residue" description="Phosphothreonine; by ROCK2" evidence="2">
    <location>
        <position position="555"/>
    </location>
</feature>
<feature type="modified residue" description="Asymmetric dimethylarginine" evidence="3">
    <location>
        <position position="565"/>
    </location>
</feature>
<feature type="splice variant" id="VSP_044941" description="In isoform 2." evidence="16">
    <location>
        <begin position="1"/>
        <end position="36"/>
    </location>
</feature>
<feature type="sequence variant" id="VAR_022016" description="In dbSNP:rs2228979.">
    <original>A</original>
    <variation>T</variation>
    <location>
        <position position="118"/>
    </location>
</feature>
<feature type="sequence variant" id="VAR_036316" description="In a colorectal cancer sample; somatic mutation; dbSNP:rs1337153084." evidence="11">
    <original>R</original>
    <variation>C</variation>
    <location>
        <position position="481"/>
    </location>
</feature>
<feature type="mutagenesis site" description="Inhibits axon outgrowth formation in hippocampal neurons and decreases binding to CYFIP1." evidence="10">
    <original>D</original>
    <variation>N</variation>
    <location>
        <position position="71"/>
    </location>
</feature>
<feature type="mutagenesis site" description="No effect." evidence="6">
    <original>S</original>
    <variation>A</variation>
    <location>
        <position position="507"/>
    </location>
</feature>
<feature type="mutagenesis site" description="Greatly diminishes binding to 3F4 antibody." evidence="6">
    <original>T</original>
    <variation>A</variation>
    <location>
        <position position="509"/>
    </location>
</feature>
<feature type="mutagenesis site" description="No effect." evidence="6">
    <original>T</original>
    <variation>A</variation>
    <location>
        <position position="512"/>
    </location>
</feature>
<feature type="mutagenesis site" description="No effect." evidence="6">
    <original>T</original>
    <variation>A</variation>
    <location>
        <position position="514"/>
    </location>
</feature>
<feature type="mutagenesis site" description="No effect." evidence="6">
    <original>S</original>
    <variation>A</variation>
    <location>
        <position position="517"/>
    </location>
</feature>
<feature type="mutagenesis site" description="Greatly diminishes binding to 3F4 antibody." evidence="6">
    <original>S</original>
    <variation>A</variation>
    <location>
        <position position="518"/>
    </location>
</feature>
<feature type="mutagenesis site" description="No effect." evidence="6">
    <original>T</original>
    <variation>A</variation>
    <location>
        <position position="521"/>
    </location>
</feature>
<feature type="mutagenesis site" description="Greatly diminishes binding to 3F4 antibody." evidence="6">
    <original>S</original>
    <variation>A</variation>
    <location>
        <position position="522"/>
    </location>
</feature>
<feature type="strand" evidence="23">
    <location>
        <begin position="17"/>
        <end position="21"/>
    </location>
</feature>
<feature type="strand" evidence="23">
    <location>
        <begin position="23"/>
        <end position="25"/>
    </location>
</feature>
<feature type="strand" evidence="23">
    <location>
        <begin position="30"/>
        <end position="32"/>
    </location>
</feature>
<feature type="strand" evidence="23">
    <location>
        <begin position="34"/>
        <end position="38"/>
    </location>
</feature>
<feature type="strand" evidence="23">
    <location>
        <begin position="41"/>
        <end position="48"/>
    </location>
</feature>
<feature type="strand" evidence="22">
    <location>
        <begin position="53"/>
        <end position="55"/>
    </location>
</feature>
<feature type="strand" evidence="23">
    <location>
        <begin position="56"/>
        <end position="59"/>
    </location>
</feature>
<feature type="strand" evidence="23">
    <location>
        <begin position="64"/>
        <end position="67"/>
    </location>
</feature>
<feature type="strand" evidence="23">
    <location>
        <begin position="69"/>
        <end position="72"/>
    </location>
</feature>
<feature type="helix" evidence="23">
    <location>
        <begin position="89"/>
        <end position="98"/>
    </location>
</feature>
<feature type="strand" evidence="23">
    <location>
        <begin position="101"/>
        <end position="108"/>
    </location>
</feature>
<feature type="helix" evidence="23">
    <location>
        <begin position="116"/>
        <end position="130"/>
    </location>
</feature>
<feature type="strand" evidence="23">
    <location>
        <begin position="132"/>
        <end position="140"/>
    </location>
</feature>
<feature type="helix" evidence="23">
    <location>
        <begin position="148"/>
        <end position="159"/>
    </location>
</feature>
<feature type="strand" evidence="23">
    <location>
        <begin position="163"/>
        <end position="168"/>
    </location>
</feature>
<feature type="turn" evidence="23">
    <location>
        <begin position="171"/>
        <end position="173"/>
    </location>
</feature>
<feature type="helix" evidence="23">
    <location>
        <begin position="178"/>
        <end position="191"/>
    </location>
</feature>
<feature type="strand" evidence="23">
    <location>
        <begin position="194"/>
        <end position="198"/>
    </location>
</feature>
<feature type="helix" evidence="23">
    <location>
        <begin position="202"/>
        <end position="214"/>
    </location>
</feature>
<feature type="helix" evidence="23">
    <location>
        <begin position="220"/>
        <end position="226"/>
    </location>
</feature>
<feature type="helix" evidence="23">
    <location>
        <begin position="229"/>
        <end position="246"/>
    </location>
</feature>
<feature type="strand" evidence="23">
    <location>
        <begin position="250"/>
        <end position="255"/>
    </location>
</feature>
<feature type="helix" evidence="23">
    <location>
        <begin position="258"/>
        <end position="269"/>
    </location>
</feature>
<feature type="strand" evidence="23">
    <location>
        <begin position="274"/>
        <end position="279"/>
    </location>
</feature>
<feature type="helix" evidence="23">
    <location>
        <begin position="280"/>
        <end position="284"/>
    </location>
</feature>
<feature type="helix" evidence="23">
    <location>
        <begin position="287"/>
        <end position="291"/>
    </location>
</feature>
<feature type="helix" evidence="23">
    <location>
        <begin position="295"/>
        <end position="300"/>
    </location>
</feature>
<feature type="helix" evidence="23">
    <location>
        <begin position="313"/>
        <end position="322"/>
    </location>
</feature>
<feature type="strand" evidence="24">
    <location>
        <begin position="324"/>
        <end position="326"/>
    </location>
</feature>
<feature type="helix" evidence="23">
    <location>
        <begin position="338"/>
        <end position="341"/>
    </location>
</feature>
<feature type="helix" evidence="23">
    <location>
        <begin position="342"/>
        <end position="344"/>
    </location>
</feature>
<feature type="helix" evidence="23">
    <location>
        <begin position="348"/>
        <end position="350"/>
    </location>
</feature>
<feature type="turn" evidence="23">
    <location>
        <begin position="358"/>
        <end position="360"/>
    </location>
</feature>
<feature type="helix" evidence="23">
    <location>
        <begin position="361"/>
        <end position="369"/>
    </location>
</feature>
<feature type="turn" evidence="23">
    <location>
        <begin position="370"/>
        <end position="373"/>
    </location>
</feature>
<feature type="helix" evidence="23">
    <location>
        <begin position="377"/>
        <end position="384"/>
    </location>
</feature>
<feature type="helix" evidence="23">
    <location>
        <begin position="386"/>
        <end position="391"/>
    </location>
</feature>
<feature type="turn" evidence="23">
    <location>
        <begin position="395"/>
        <end position="397"/>
    </location>
</feature>
<feature type="strand" evidence="23">
    <location>
        <begin position="409"/>
        <end position="419"/>
    </location>
</feature>
<feature type="turn" evidence="23">
    <location>
        <begin position="422"/>
        <end position="424"/>
    </location>
</feature>
<feature type="strand" evidence="23">
    <location>
        <begin position="425"/>
        <end position="428"/>
    </location>
</feature>
<feature type="turn" evidence="23">
    <location>
        <begin position="433"/>
        <end position="436"/>
    </location>
</feature>
<feature type="strand" evidence="23">
    <location>
        <begin position="438"/>
        <end position="448"/>
    </location>
</feature>
<feature type="strand" evidence="23">
    <location>
        <begin position="451"/>
        <end position="455"/>
    </location>
</feature>
<feature type="helix" evidence="23">
    <location>
        <begin position="476"/>
        <end position="486"/>
    </location>
</feature>
<name>DPYL2_HUMAN</name>
<accession>Q16555</accession>
<accession>A8K5H2</accession>
<accession>B4DR31</accession>
<accession>D3DSS7</accession>
<accession>O00424</accession>
<sequence>MSYQGKKNIPRITSDRLLIKGGKIVNDDQSFYADIYMEDGLIKQIGENLIVPGGVKTIEAHSRMVIPGGIDVHTRFQMPDQGMTSADDFFQGTKAALAGGTTMIIDHVVPEPGTSLLAAFDQWREWADSKSCCDYSLHVDISEWHKGIQEEMEALVKDHGVNSFLVYMAFKDRFQLTDCQIYEVLSVIRDIGAIAQVHAENGDIIAEEQQRILDLGITGPEGHVLSRPEEVEAEAVNRAITIANQTNCPLYITKVMSKSSAEVIAQARKKGTVVYGEPITASLGTDGSHYWSKNWAKAAAFVTSPPLSPDPTTPDFLNSLLSCGDLQVTGSAHCTFNTAQKAVGKDNFTLIPEGTNGTEERMSVIWDKAVVTGKMDENQFVAVTSTNAAKVFNLYPRKGRIAVGSDADLVIWDPDSVKTISAKTHNSSLEYNIFEGMECRGSPLVVISQGKIVLEDGTLHVTEGSGRYIPRKPFPDFVYKRIKARSRLAELRGVPRGLYDGPVCEVSVTPKTVTPASSAKTSPAKQQAPPVRNLHQSGFSLSGAQIDDNIPRRTTQRIVAPPGGRANITSLG</sequence>
<proteinExistence type="evidence at protein level"/>
<dbReference type="EMBL" id="U17279">
    <property type="protein sequence ID" value="AAA93202.1"/>
    <property type="molecule type" value="mRNA"/>
</dbReference>
<dbReference type="EMBL" id="D78013">
    <property type="protein sequence ID" value="BAA11191.1"/>
    <property type="molecule type" value="mRNA"/>
</dbReference>
<dbReference type="EMBL" id="U97105">
    <property type="protein sequence ID" value="AAC05793.1"/>
    <property type="molecule type" value="mRNA"/>
</dbReference>
<dbReference type="EMBL" id="AB020777">
    <property type="protein sequence ID" value="BAA86991.1"/>
    <property type="molecule type" value="Genomic_DNA"/>
</dbReference>
<dbReference type="EMBL" id="AK291287">
    <property type="protein sequence ID" value="BAF83976.1"/>
    <property type="molecule type" value="mRNA"/>
</dbReference>
<dbReference type="EMBL" id="AK299077">
    <property type="protein sequence ID" value="BAG61143.1"/>
    <property type="molecule type" value="mRNA"/>
</dbReference>
<dbReference type="EMBL" id="AC015564">
    <property type="status" value="NOT_ANNOTATED_CDS"/>
    <property type="molecule type" value="Genomic_DNA"/>
</dbReference>
<dbReference type="EMBL" id="AC015743">
    <property type="status" value="NOT_ANNOTATED_CDS"/>
    <property type="molecule type" value="Genomic_DNA"/>
</dbReference>
<dbReference type="EMBL" id="CH471080">
    <property type="protein sequence ID" value="EAW63573.1"/>
    <property type="molecule type" value="Genomic_DNA"/>
</dbReference>
<dbReference type="EMBL" id="CH471080">
    <property type="protein sequence ID" value="EAW63574.1"/>
    <property type="molecule type" value="Genomic_DNA"/>
</dbReference>
<dbReference type="EMBL" id="BC056408">
    <property type="protein sequence ID" value="AAH56408.1"/>
    <property type="molecule type" value="mRNA"/>
</dbReference>
<dbReference type="EMBL" id="BC067109">
    <property type="protein sequence ID" value="AAH67109.1"/>
    <property type="molecule type" value="mRNA"/>
</dbReference>
<dbReference type="CCDS" id="CCDS59096.1">
    <molecule id="Q16555-2"/>
</dbReference>
<dbReference type="CCDS" id="CCDS6051.1">
    <molecule id="Q16555-1"/>
</dbReference>
<dbReference type="PIR" id="JC5317">
    <property type="entry name" value="JC5317"/>
</dbReference>
<dbReference type="RefSeq" id="NP_001184222.1">
    <property type="nucleotide sequence ID" value="NM_001197293.2"/>
</dbReference>
<dbReference type="RefSeq" id="NP_001231533.1">
    <molecule id="Q16555-2"/>
    <property type="nucleotide sequence ID" value="NM_001244604.2"/>
</dbReference>
<dbReference type="RefSeq" id="NP_001377.1">
    <molecule id="Q16555-1"/>
    <property type="nucleotide sequence ID" value="NM_001386.6"/>
</dbReference>
<dbReference type="PDB" id="2GSE">
    <property type="method" value="X-ray"/>
    <property type="resolution" value="2.40 A"/>
    <property type="chains" value="A/B/C/D=13-490"/>
</dbReference>
<dbReference type="PDB" id="2VM8">
    <property type="method" value="X-ray"/>
    <property type="resolution" value="1.90 A"/>
    <property type="chains" value="A/B/C/D=13-490"/>
</dbReference>
<dbReference type="PDB" id="5LXX">
    <property type="method" value="X-ray"/>
    <property type="resolution" value="1.25 A"/>
    <property type="chains" value="A/B=13-490"/>
</dbReference>
<dbReference type="PDB" id="5MKV">
    <property type="method" value="X-ray"/>
    <property type="resolution" value="1.80 A"/>
    <property type="chains" value="A/B/C/D=13-516"/>
</dbReference>
<dbReference type="PDB" id="5MLE">
    <property type="method" value="X-ray"/>
    <property type="resolution" value="2.48 A"/>
    <property type="chains" value="A/C=13-516"/>
</dbReference>
<dbReference type="PDB" id="5X1A">
    <property type="method" value="X-ray"/>
    <property type="resolution" value="1.82 A"/>
    <property type="chains" value="A=1-525"/>
</dbReference>
<dbReference type="PDB" id="5X1C">
    <property type="method" value="X-ray"/>
    <property type="resolution" value="2.10 A"/>
    <property type="chains" value="A/B=13-490"/>
</dbReference>
<dbReference type="PDB" id="5X1D">
    <property type="method" value="X-ray"/>
    <property type="resolution" value="2.20 A"/>
    <property type="chains" value="A=1-525"/>
</dbReference>
<dbReference type="PDB" id="5YZ5">
    <property type="method" value="X-ray"/>
    <property type="resolution" value="1.80 A"/>
    <property type="chains" value="A=1-525"/>
</dbReference>
<dbReference type="PDB" id="5YZA">
    <property type="method" value="X-ray"/>
    <property type="resolution" value="2.30 A"/>
    <property type="chains" value="A=1-525"/>
</dbReference>
<dbReference type="PDB" id="5YZB">
    <property type="method" value="X-ray"/>
    <property type="resolution" value="2.80 A"/>
    <property type="chains" value="A=1-525"/>
</dbReference>
<dbReference type="PDB" id="6JV9">
    <property type="method" value="X-ray"/>
    <property type="resolution" value="2.26 A"/>
    <property type="chains" value="A/B/C/D=1-532"/>
</dbReference>
<dbReference type="PDB" id="6JVB">
    <property type="method" value="X-ray"/>
    <property type="resolution" value="2.00 A"/>
    <property type="chains" value="A/B/C/D=1-532"/>
</dbReference>
<dbReference type="PDB" id="7X68">
    <property type="method" value="X-ray"/>
    <property type="resolution" value="1.80 A"/>
    <property type="chains" value="A=1-525"/>
</dbReference>
<dbReference type="PDB" id="8DNM">
    <property type="method" value="EM"/>
    <property type="resolution" value="2.76 A"/>
    <property type="chains" value="A/B/C/D=1-572"/>
</dbReference>
<dbReference type="PDBsum" id="2GSE"/>
<dbReference type="PDBsum" id="2VM8"/>
<dbReference type="PDBsum" id="5LXX"/>
<dbReference type="PDBsum" id="5MKV"/>
<dbReference type="PDBsum" id="5MLE"/>
<dbReference type="PDBsum" id="5X1A"/>
<dbReference type="PDBsum" id="5X1C"/>
<dbReference type="PDBsum" id="5X1D"/>
<dbReference type="PDBsum" id="5YZ5"/>
<dbReference type="PDBsum" id="5YZA"/>
<dbReference type="PDBsum" id="5YZB"/>
<dbReference type="PDBsum" id="6JV9"/>
<dbReference type="PDBsum" id="6JVB"/>
<dbReference type="PDBsum" id="7X68"/>
<dbReference type="PDBsum" id="8DNM"/>
<dbReference type="EMDB" id="EMD-27574"/>
<dbReference type="SMR" id="Q16555"/>
<dbReference type="BioGRID" id="108142">
    <property type="interactions" value="218"/>
</dbReference>
<dbReference type="FunCoup" id="Q16555">
    <property type="interactions" value="1360"/>
</dbReference>
<dbReference type="IntAct" id="Q16555">
    <property type="interactions" value="56"/>
</dbReference>
<dbReference type="MINT" id="Q16555"/>
<dbReference type="STRING" id="9606.ENSP00000427985"/>
<dbReference type="ChEMBL" id="CHEMBL4295834"/>
<dbReference type="DrugBank" id="DB11638">
    <property type="generic name" value="Artenimol"/>
</dbReference>
<dbReference type="DrugBank" id="DB06218">
    <property type="generic name" value="Lacosamide"/>
</dbReference>
<dbReference type="DrugCentral" id="Q16555"/>
<dbReference type="MEROPS" id="M38.975"/>
<dbReference type="TCDB" id="8.A.228.1.1">
    <property type="family name" value="the collapsin response mediator protein 2 (crmp2) family"/>
</dbReference>
<dbReference type="GlyCosmos" id="Q16555">
    <property type="glycosylation" value="6 sites, 1 glycan"/>
</dbReference>
<dbReference type="GlyGen" id="Q16555">
    <property type="glycosylation" value="14 sites, 4 N-linked glycans (3 sites), 1 O-linked glycan (8 sites)"/>
</dbReference>
<dbReference type="iPTMnet" id="Q16555"/>
<dbReference type="MetOSite" id="Q16555"/>
<dbReference type="PhosphoSitePlus" id="Q16555"/>
<dbReference type="SwissPalm" id="Q16555"/>
<dbReference type="BioMuta" id="DPYSL2"/>
<dbReference type="DMDM" id="3122051"/>
<dbReference type="REPRODUCTION-2DPAGE" id="IPI00257508"/>
<dbReference type="REPRODUCTION-2DPAGE" id="Q16555"/>
<dbReference type="CPTAC" id="CPTAC-60"/>
<dbReference type="CPTAC" id="CPTAC-61"/>
<dbReference type="jPOST" id="Q16555"/>
<dbReference type="MassIVE" id="Q16555"/>
<dbReference type="PaxDb" id="9606-ENSP00000309539"/>
<dbReference type="PeptideAtlas" id="Q16555"/>
<dbReference type="ProteomicsDB" id="4921"/>
<dbReference type="ProteomicsDB" id="60912">
    <molecule id="Q16555-1"/>
</dbReference>
<dbReference type="Pumba" id="Q16555"/>
<dbReference type="TopDownProteomics" id="Q16555-1">
    <molecule id="Q16555-1"/>
</dbReference>
<dbReference type="ABCD" id="Q16555">
    <property type="antibodies" value="1 sequenced antibody"/>
</dbReference>
<dbReference type="Antibodypedia" id="1039">
    <property type="antibodies" value="655 antibodies from 41 providers"/>
</dbReference>
<dbReference type="DNASU" id="1808"/>
<dbReference type="Ensembl" id="ENST00000311151.9">
    <molecule id="Q16555-1"/>
    <property type="protein sequence ID" value="ENSP00000309539.5"/>
    <property type="gene ID" value="ENSG00000092964.18"/>
</dbReference>
<dbReference type="Ensembl" id="ENST00000523027.1">
    <molecule id="Q16555-2"/>
    <property type="protein sequence ID" value="ENSP00000431117.1"/>
    <property type="gene ID" value="ENSG00000092964.18"/>
</dbReference>
<dbReference type="GeneID" id="1808"/>
<dbReference type="KEGG" id="hsa:1808"/>
<dbReference type="UCSC" id="uc003xfb.3">
    <molecule id="Q16555-1"/>
    <property type="organism name" value="human"/>
</dbReference>
<dbReference type="AGR" id="HGNC:3014"/>
<dbReference type="CTD" id="1808"/>
<dbReference type="DisGeNET" id="1808"/>
<dbReference type="GeneCards" id="DPYSL2"/>
<dbReference type="HGNC" id="HGNC:3014">
    <property type="gene designation" value="DPYSL2"/>
</dbReference>
<dbReference type="HPA" id="ENSG00000092964">
    <property type="expression patterns" value="Tissue enhanced (brain)"/>
</dbReference>
<dbReference type="MalaCards" id="DPYSL2"/>
<dbReference type="MIM" id="602463">
    <property type="type" value="gene"/>
</dbReference>
<dbReference type="neXtProt" id="NX_Q16555"/>
<dbReference type="OpenTargets" id="ENSG00000092964"/>
<dbReference type="Orphanet" id="178469">
    <property type="disease" value="Autosomal dominant non-syndromic intellectual disability"/>
</dbReference>
<dbReference type="PharmGKB" id="PA27472"/>
<dbReference type="VEuPathDB" id="HostDB:ENSG00000092964"/>
<dbReference type="eggNOG" id="KOG2584">
    <property type="taxonomic scope" value="Eukaryota"/>
</dbReference>
<dbReference type="GeneTree" id="ENSGT01030000234527"/>
<dbReference type="HOGENOM" id="CLU_015572_2_2_1"/>
<dbReference type="InParanoid" id="Q16555"/>
<dbReference type="OrthoDB" id="10258955at2759"/>
<dbReference type="PAN-GO" id="Q16555">
    <property type="GO annotations" value="0 GO annotations based on evolutionary models"/>
</dbReference>
<dbReference type="PhylomeDB" id="Q16555"/>
<dbReference type="TreeFam" id="TF314706"/>
<dbReference type="PathwayCommons" id="Q16555"/>
<dbReference type="Reactome" id="R-HSA-399956">
    <property type="pathway name" value="CRMPs in Sema3A signaling"/>
</dbReference>
<dbReference type="Reactome" id="R-HSA-437239">
    <property type="pathway name" value="Recycling pathway of L1"/>
</dbReference>
<dbReference type="SignaLink" id="Q16555"/>
<dbReference type="SIGNOR" id="Q16555"/>
<dbReference type="BioGRID-ORCS" id="1808">
    <property type="hits" value="16 hits in 1153 CRISPR screens"/>
</dbReference>
<dbReference type="CD-CODE" id="DEE660B4">
    <property type="entry name" value="Stress granule"/>
</dbReference>
<dbReference type="CD-CODE" id="FB4E32DD">
    <property type="entry name" value="Presynaptic clusters and postsynaptic densities"/>
</dbReference>
<dbReference type="ChiTaRS" id="DPYSL2">
    <property type="organism name" value="human"/>
</dbReference>
<dbReference type="EvolutionaryTrace" id="Q16555"/>
<dbReference type="GeneWiki" id="DPYSL2"/>
<dbReference type="GenomeRNAi" id="1808"/>
<dbReference type="Pharos" id="Q16555">
    <property type="development level" value="Tbio"/>
</dbReference>
<dbReference type="PRO" id="PR:Q16555"/>
<dbReference type="Proteomes" id="UP000005640">
    <property type="component" value="Chromosome 8"/>
</dbReference>
<dbReference type="RNAct" id="Q16555">
    <property type="molecule type" value="protein"/>
</dbReference>
<dbReference type="Bgee" id="ENSG00000092964">
    <property type="expression patterns" value="Expressed in inferior vagus X ganglion and 207 other cell types or tissues"/>
</dbReference>
<dbReference type="ExpressionAtlas" id="Q16555">
    <property type="expression patterns" value="baseline and differential"/>
</dbReference>
<dbReference type="GO" id="GO:0005929">
    <property type="term" value="C:cilium"/>
    <property type="evidence" value="ECO:0000314"/>
    <property type="project" value="HPA"/>
</dbReference>
<dbReference type="GO" id="GO:0005829">
    <property type="term" value="C:cytosol"/>
    <property type="evidence" value="ECO:0000314"/>
    <property type="project" value="HPA"/>
</dbReference>
<dbReference type="GO" id="GO:0070062">
    <property type="term" value="C:extracellular exosome"/>
    <property type="evidence" value="ECO:0007005"/>
    <property type="project" value="UniProtKB"/>
</dbReference>
<dbReference type="GO" id="GO:0015630">
    <property type="term" value="C:microtubule cytoskeleton"/>
    <property type="evidence" value="ECO:0000314"/>
    <property type="project" value="HPA"/>
</dbReference>
<dbReference type="GO" id="GO:0072686">
    <property type="term" value="C:mitotic spindle"/>
    <property type="evidence" value="ECO:0000314"/>
    <property type="project" value="HPA"/>
</dbReference>
<dbReference type="GO" id="GO:0005886">
    <property type="term" value="C:plasma membrane"/>
    <property type="evidence" value="ECO:0000314"/>
    <property type="project" value="HPA"/>
</dbReference>
<dbReference type="GO" id="GO:0004157">
    <property type="term" value="F:dihydropyrimidinase activity"/>
    <property type="evidence" value="ECO:0000304"/>
    <property type="project" value="ProtInc"/>
</dbReference>
<dbReference type="GO" id="GO:0016812">
    <property type="term" value="F:hydrolase activity, acting on carbon-nitrogen (but not peptide) bonds, in cyclic amides"/>
    <property type="evidence" value="ECO:0000318"/>
    <property type="project" value="GO_Central"/>
</dbReference>
<dbReference type="GO" id="GO:0042802">
    <property type="term" value="F:identical protein binding"/>
    <property type="evidence" value="ECO:0000353"/>
    <property type="project" value="IntAct"/>
</dbReference>
<dbReference type="GO" id="GO:0030154">
    <property type="term" value="P:cell differentiation"/>
    <property type="evidence" value="ECO:0007669"/>
    <property type="project" value="UniProtKB-KW"/>
</dbReference>
<dbReference type="GO" id="GO:0007010">
    <property type="term" value="P:cytoskeleton organization"/>
    <property type="evidence" value="ECO:0000250"/>
    <property type="project" value="UniProtKB"/>
</dbReference>
<dbReference type="GO" id="GO:0006897">
    <property type="term" value="P:endocytosis"/>
    <property type="evidence" value="ECO:0000315"/>
    <property type="project" value="UniProtKB"/>
</dbReference>
<dbReference type="GO" id="GO:0007399">
    <property type="term" value="P:nervous system development"/>
    <property type="evidence" value="ECO:0000304"/>
    <property type="project" value="ProtInc"/>
</dbReference>
<dbReference type="GO" id="GO:0006139">
    <property type="term" value="P:nucleobase-containing compound metabolic process"/>
    <property type="evidence" value="ECO:0000304"/>
    <property type="project" value="ProtInc"/>
</dbReference>
<dbReference type="GO" id="GO:0007165">
    <property type="term" value="P:signal transduction"/>
    <property type="evidence" value="ECO:0000304"/>
    <property type="project" value="ProtInc"/>
</dbReference>
<dbReference type="CDD" id="cd01314">
    <property type="entry name" value="D-HYD"/>
    <property type="match status" value="1"/>
</dbReference>
<dbReference type="FunFam" id="2.30.40.10:FF:000021">
    <property type="entry name" value="Dihydropyrimidinase-related protein 2"/>
    <property type="match status" value="1"/>
</dbReference>
<dbReference type="FunFam" id="2.30.40.10:FF:000022">
    <property type="entry name" value="Dihydropyrimidinase-related protein 2"/>
    <property type="match status" value="1"/>
</dbReference>
<dbReference type="FunFam" id="3.20.20.140:FF:000174">
    <property type="entry name" value="Dihydropyrimidinase-related protein 2"/>
    <property type="match status" value="1"/>
</dbReference>
<dbReference type="Gene3D" id="3.20.20.140">
    <property type="entry name" value="Metal-dependent hydrolases"/>
    <property type="match status" value="1"/>
</dbReference>
<dbReference type="Gene3D" id="2.30.40.10">
    <property type="entry name" value="Urease, subunit C, domain 1"/>
    <property type="match status" value="1"/>
</dbReference>
<dbReference type="InterPro" id="IPR006680">
    <property type="entry name" value="Amidohydro-rel"/>
</dbReference>
<dbReference type="InterPro" id="IPR011778">
    <property type="entry name" value="Hydantoinase/dihydroPyrase"/>
</dbReference>
<dbReference type="InterPro" id="IPR011059">
    <property type="entry name" value="Metal-dep_hydrolase_composite"/>
</dbReference>
<dbReference type="InterPro" id="IPR032466">
    <property type="entry name" value="Metal_Hydrolase"/>
</dbReference>
<dbReference type="InterPro" id="IPR050378">
    <property type="entry name" value="Metallo-dep_Hydrolases_sf"/>
</dbReference>
<dbReference type="NCBIfam" id="TIGR02033">
    <property type="entry name" value="D-hydantoinase"/>
    <property type="match status" value="1"/>
</dbReference>
<dbReference type="PANTHER" id="PTHR11647:SF56">
    <property type="entry name" value="DIHYDROPYRIMIDINASE-RELATED PROTEIN 2"/>
    <property type="match status" value="1"/>
</dbReference>
<dbReference type="PANTHER" id="PTHR11647">
    <property type="entry name" value="HYDRANTOINASE/DIHYDROPYRIMIDINASE FAMILY MEMBER"/>
    <property type="match status" value="1"/>
</dbReference>
<dbReference type="Pfam" id="PF01979">
    <property type="entry name" value="Amidohydro_1"/>
    <property type="match status" value="1"/>
</dbReference>
<dbReference type="SUPFAM" id="SSF51338">
    <property type="entry name" value="Composite domain of metallo-dependent hydrolases"/>
    <property type="match status" value="2"/>
</dbReference>
<dbReference type="SUPFAM" id="SSF51556">
    <property type="entry name" value="Metallo-dependent hydrolases"/>
    <property type="match status" value="1"/>
</dbReference>
<reference key="1">
    <citation type="journal article" date="1995" name="Nature">
        <title>Collapsin-induced growth cone collapse mediated by an intracellular protein related to UNC-33.</title>
        <authorList>
            <person name="Goshima Y."/>
            <person name="Nakamura F."/>
            <person name="Strittmatter P."/>
            <person name="Strittmatter S.M."/>
        </authorList>
    </citation>
    <scope>NUCLEOTIDE SEQUENCE [MRNA] (ISOFORM 1)</scope>
</reference>
<reference key="2">
    <citation type="journal article" date="1996" name="Gene">
        <title>A novel gene family defined by human dihydropyrimidinase and three related proteins with differential tissue distribution.</title>
        <authorList>
            <person name="Hamajima N."/>
            <person name="Matsuda K."/>
            <person name="Sakata S."/>
            <person name="Tamaki N."/>
            <person name="Sasaki M."/>
            <person name="Nonaka M."/>
        </authorList>
    </citation>
    <scope>NUCLEOTIDE SEQUENCE [MRNA] (ISOFORM 1)</scope>
    <source>
        <tissue>Brain</tissue>
    </source>
</reference>
<reference key="3">
    <citation type="submission" date="1998-03" db="EMBL/GenBank/DDBJ databases">
        <title>A cDNA clone highly expressed in human brain and deleted in liver cancer.</title>
        <authorList>
            <person name="Zhou J."/>
            <person name="Chen Y."/>
            <person name="Gu J.R."/>
        </authorList>
    </citation>
    <scope>NUCLEOTIDE SEQUENCE [MRNA] (ISOFORM 1)</scope>
    <source>
        <tissue>Fetal liver</tissue>
    </source>
</reference>
<reference key="4">
    <citation type="journal article" date="1999" name="DNA Res.">
        <title>Characterization of the human dihydropyrimidinase-related protein 2 (DRP-2) gene.</title>
        <authorList>
            <person name="Kitamura K."/>
            <person name="Takayama M."/>
            <person name="Hamajima N."/>
            <person name="Nakanishi M."/>
            <person name="Sasaki M."/>
            <person name="Endo Y."/>
            <person name="Takemoto T."/>
            <person name="Kimura H."/>
            <person name="Iwaki M."/>
            <person name="Nonaka M."/>
        </authorList>
    </citation>
    <scope>NUCLEOTIDE SEQUENCE [GENOMIC DNA]</scope>
</reference>
<reference key="5">
    <citation type="journal article" date="2004" name="Nat. Genet.">
        <title>Complete sequencing and characterization of 21,243 full-length human cDNAs.</title>
        <authorList>
            <person name="Ota T."/>
            <person name="Suzuki Y."/>
            <person name="Nishikawa T."/>
            <person name="Otsuki T."/>
            <person name="Sugiyama T."/>
            <person name="Irie R."/>
            <person name="Wakamatsu A."/>
            <person name="Hayashi K."/>
            <person name="Sato H."/>
            <person name="Nagai K."/>
            <person name="Kimura K."/>
            <person name="Makita H."/>
            <person name="Sekine M."/>
            <person name="Obayashi M."/>
            <person name="Nishi T."/>
            <person name="Shibahara T."/>
            <person name="Tanaka T."/>
            <person name="Ishii S."/>
            <person name="Yamamoto J."/>
            <person name="Saito K."/>
            <person name="Kawai Y."/>
            <person name="Isono Y."/>
            <person name="Nakamura Y."/>
            <person name="Nagahari K."/>
            <person name="Murakami K."/>
            <person name="Yasuda T."/>
            <person name="Iwayanagi T."/>
            <person name="Wagatsuma M."/>
            <person name="Shiratori A."/>
            <person name="Sudo H."/>
            <person name="Hosoiri T."/>
            <person name="Kaku Y."/>
            <person name="Kodaira H."/>
            <person name="Kondo H."/>
            <person name="Sugawara M."/>
            <person name="Takahashi M."/>
            <person name="Kanda K."/>
            <person name="Yokoi T."/>
            <person name="Furuya T."/>
            <person name="Kikkawa E."/>
            <person name="Omura Y."/>
            <person name="Abe K."/>
            <person name="Kamihara K."/>
            <person name="Katsuta N."/>
            <person name="Sato K."/>
            <person name="Tanikawa M."/>
            <person name="Yamazaki M."/>
            <person name="Ninomiya K."/>
            <person name="Ishibashi T."/>
            <person name="Yamashita H."/>
            <person name="Murakawa K."/>
            <person name="Fujimori K."/>
            <person name="Tanai H."/>
            <person name="Kimata M."/>
            <person name="Watanabe M."/>
            <person name="Hiraoka S."/>
            <person name="Chiba Y."/>
            <person name="Ishida S."/>
            <person name="Ono Y."/>
            <person name="Takiguchi S."/>
            <person name="Watanabe S."/>
            <person name="Yosida M."/>
            <person name="Hotuta T."/>
            <person name="Kusano J."/>
            <person name="Kanehori K."/>
            <person name="Takahashi-Fujii A."/>
            <person name="Hara H."/>
            <person name="Tanase T.-O."/>
            <person name="Nomura Y."/>
            <person name="Togiya S."/>
            <person name="Komai F."/>
            <person name="Hara R."/>
            <person name="Takeuchi K."/>
            <person name="Arita M."/>
            <person name="Imose N."/>
            <person name="Musashino K."/>
            <person name="Yuuki H."/>
            <person name="Oshima A."/>
            <person name="Sasaki N."/>
            <person name="Aotsuka S."/>
            <person name="Yoshikawa Y."/>
            <person name="Matsunawa H."/>
            <person name="Ichihara T."/>
            <person name="Shiohata N."/>
            <person name="Sano S."/>
            <person name="Moriya S."/>
            <person name="Momiyama H."/>
            <person name="Satoh N."/>
            <person name="Takami S."/>
            <person name="Terashima Y."/>
            <person name="Suzuki O."/>
            <person name="Nakagawa S."/>
            <person name="Senoh A."/>
            <person name="Mizoguchi H."/>
            <person name="Goto Y."/>
            <person name="Shimizu F."/>
            <person name="Wakebe H."/>
            <person name="Hishigaki H."/>
            <person name="Watanabe T."/>
            <person name="Sugiyama A."/>
            <person name="Takemoto M."/>
            <person name="Kawakami B."/>
            <person name="Yamazaki M."/>
            <person name="Watanabe K."/>
            <person name="Kumagai A."/>
            <person name="Itakura S."/>
            <person name="Fukuzumi Y."/>
            <person name="Fujimori Y."/>
            <person name="Komiyama M."/>
            <person name="Tashiro H."/>
            <person name="Tanigami A."/>
            <person name="Fujiwara T."/>
            <person name="Ono T."/>
            <person name="Yamada K."/>
            <person name="Fujii Y."/>
            <person name="Ozaki K."/>
            <person name="Hirao M."/>
            <person name="Ohmori Y."/>
            <person name="Kawabata A."/>
            <person name="Hikiji T."/>
            <person name="Kobatake N."/>
            <person name="Inagaki H."/>
            <person name="Ikema Y."/>
            <person name="Okamoto S."/>
            <person name="Okitani R."/>
            <person name="Kawakami T."/>
            <person name="Noguchi S."/>
            <person name="Itoh T."/>
            <person name="Shigeta K."/>
            <person name="Senba T."/>
            <person name="Matsumura K."/>
            <person name="Nakajima Y."/>
            <person name="Mizuno T."/>
            <person name="Morinaga M."/>
            <person name="Sasaki M."/>
            <person name="Togashi T."/>
            <person name="Oyama M."/>
            <person name="Hata H."/>
            <person name="Watanabe M."/>
            <person name="Komatsu T."/>
            <person name="Mizushima-Sugano J."/>
            <person name="Satoh T."/>
            <person name="Shirai Y."/>
            <person name="Takahashi Y."/>
            <person name="Nakagawa K."/>
            <person name="Okumura K."/>
            <person name="Nagase T."/>
            <person name="Nomura N."/>
            <person name="Kikuchi H."/>
            <person name="Masuho Y."/>
            <person name="Yamashita R."/>
            <person name="Nakai K."/>
            <person name="Yada T."/>
            <person name="Nakamura Y."/>
            <person name="Ohara O."/>
            <person name="Isogai T."/>
            <person name="Sugano S."/>
        </authorList>
    </citation>
    <scope>NUCLEOTIDE SEQUENCE [LARGE SCALE MRNA] (ISOFORMS 1 AND 2)</scope>
</reference>
<reference key="6">
    <citation type="journal article" date="2006" name="Nature">
        <title>DNA sequence and analysis of human chromosome 8.</title>
        <authorList>
            <person name="Nusbaum C."/>
            <person name="Mikkelsen T.S."/>
            <person name="Zody M.C."/>
            <person name="Asakawa S."/>
            <person name="Taudien S."/>
            <person name="Garber M."/>
            <person name="Kodira C.D."/>
            <person name="Schueler M.G."/>
            <person name="Shimizu A."/>
            <person name="Whittaker C.A."/>
            <person name="Chang J.L."/>
            <person name="Cuomo C.A."/>
            <person name="Dewar K."/>
            <person name="FitzGerald M.G."/>
            <person name="Yang X."/>
            <person name="Allen N.R."/>
            <person name="Anderson S."/>
            <person name="Asakawa T."/>
            <person name="Blechschmidt K."/>
            <person name="Bloom T."/>
            <person name="Borowsky M.L."/>
            <person name="Butler J."/>
            <person name="Cook A."/>
            <person name="Corum B."/>
            <person name="DeArellano K."/>
            <person name="DeCaprio D."/>
            <person name="Dooley K.T."/>
            <person name="Dorris L. III"/>
            <person name="Engels R."/>
            <person name="Gloeckner G."/>
            <person name="Hafez N."/>
            <person name="Hagopian D.S."/>
            <person name="Hall J.L."/>
            <person name="Ishikawa S.K."/>
            <person name="Jaffe D.B."/>
            <person name="Kamat A."/>
            <person name="Kudoh J."/>
            <person name="Lehmann R."/>
            <person name="Lokitsang T."/>
            <person name="Macdonald P."/>
            <person name="Major J.E."/>
            <person name="Matthews C.D."/>
            <person name="Mauceli E."/>
            <person name="Menzel U."/>
            <person name="Mihalev A.H."/>
            <person name="Minoshima S."/>
            <person name="Murayama Y."/>
            <person name="Naylor J.W."/>
            <person name="Nicol R."/>
            <person name="Nguyen C."/>
            <person name="O'Leary S.B."/>
            <person name="O'Neill K."/>
            <person name="Parker S.C.J."/>
            <person name="Polley A."/>
            <person name="Raymond C.K."/>
            <person name="Reichwald K."/>
            <person name="Rodriguez J."/>
            <person name="Sasaki T."/>
            <person name="Schilhabel M."/>
            <person name="Siddiqui R."/>
            <person name="Smith C.L."/>
            <person name="Sneddon T.P."/>
            <person name="Talamas J.A."/>
            <person name="Tenzin P."/>
            <person name="Topham K."/>
            <person name="Venkataraman V."/>
            <person name="Wen G."/>
            <person name="Yamazaki S."/>
            <person name="Young S.K."/>
            <person name="Zeng Q."/>
            <person name="Zimmer A.R."/>
            <person name="Rosenthal A."/>
            <person name="Birren B.W."/>
            <person name="Platzer M."/>
            <person name="Shimizu N."/>
            <person name="Lander E.S."/>
        </authorList>
    </citation>
    <scope>NUCLEOTIDE SEQUENCE [LARGE SCALE GENOMIC DNA]</scope>
</reference>
<reference key="7">
    <citation type="submission" date="2005-09" db="EMBL/GenBank/DDBJ databases">
        <authorList>
            <person name="Mural R.J."/>
            <person name="Istrail S."/>
            <person name="Sutton G.G."/>
            <person name="Florea L."/>
            <person name="Halpern A.L."/>
            <person name="Mobarry C.M."/>
            <person name="Lippert R."/>
            <person name="Walenz B."/>
            <person name="Shatkay H."/>
            <person name="Dew I."/>
            <person name="Miller J.R."/>
            <person name="Flanigan M.J."/>
            <person name="Edwards N.J."/>
            <person name="Bolanos R."/>
            <person name="Fasulo D."/>
            <person name="Halldorsson B.V."/>
            <person name="Hannenhalli S."/>
            <person name="Turner R."/>
            <person name="Yooseph S."/>
            <person name="Lu F."/>
            <person name="Nusskern D.R."/>
            <person name="Shue B.C."/>
            <person name="Zheng X.H."/>
            <person name="Zhong F."/>
            <person name="Delcher A.L."/>
            <person name="Huson D.H."/>
            <person name="Kravitz S.A."/>
            <person name="Mouchard L."/>
            <person name="Reinert K."/>
            <person name="Remington K.A."/>
            <person name="Clark A.G."/>
            <person name="Waterman M.S."/>
            <person name="Eichler E.E."/>
            <person name="Adams M.D."/>
            <person name="Hunkapiller M.W."/>
            <person name="Myers E.W."/>
            <person name="Venter J.C."/>
        </authorList>
    </citation>
    <scope>NUCLEOTIDE SEQUENCE [LARGE SCALE GENOMIC DNA]</scope>
</reference>
<reference key="8">
    <citation type="journal article" date="2004" name="Genome Res.">
        <title>The status, quality, and expansion of the NIH full-length cDNA project: the Mammalian Gene Collection (MGC).</title>
        <authorList>
            <consortium name="The MGC Project Team"/>
        </authorList>
    </citation>
    <scope>NUCLEOTIDE SEQUENCE [LARGE SCALE MRNA] (ISOFORM 1)</scope>
    <source>
        <tissue>Eye</tissue>
        <tissue>Testis</tissue>
    </source>
</reference>
<reference key="9">
    <citation type="submission" date="2008-12" db="UniProtKB">
        <authorList>
            <person name="Lubec G."/>
            <person name="Afjehi-Sadat L."/>
            <person name="Chen W.-Q."/>
            <person name="Sun Y."/>
        </authorList>
    </citation>
    <scope>PROTEIN SEQUENCE OF 44-56; 64-75; 147-157; 174-211; 239-254; 375-390; 401-418; 424-467; 497-511 AND 533-552</scope>
    <scope>IDENTIFICATION BY MASS SPECTROMETRY</scope>
    <source>
        <tissue>Brain</tissue>
        <tissue>Cajal-Retzius cell</tissue>
        <tissue>Fetal brain cortex</tissue>
    </source>
</reference>
<reference key="10">
    <citation type="journal article" date="2000" name="Biochemistry">
        <title>Neurofibrillary tangle-associated collapsin response mediator protein-2 (CRMP-2) is highly phosphorylated on Thr-509, Ser-518, and Ser-522.</title>
        <authorList>
            <person name="Gu Y."/>
            <person name="Hamajima N."/>
            <person name="Ihara Y."/>
        </authorList>
    </citation>
    <scope>PHOSPHORYLATION AT SER-518; SER-522 AND THR-509</scope>
    <scope>MUTAGENESIS OF SER-507; THR-509; THR-512; THR-514; SER-517; SER-518; THR-521 AND SER-522</scope>
</reference>
<reference key="11">
    <citation type="journal article" date="2001" name="Nat. Neurosci.">
        <title>CRMP-2 induces axons in cultured hippocampal neurons.</title>
        <authorList>
            <person name="Inagaki N."/>
            <person name="Chihara K."/>
            <person name="Arimura N."/>
            <person name="Menager C."/>
            <person name="Kawano Y."/>
            <person name="Matsuo N."/>
            <person name="Nishimura T."/>
            <person name="Amano M."/>
            <person name="Kaibuchi K."/>
        </authorList>
    </citation>
    <scope>FUNCTION</scope>
</reference>
<reference key="12">
    <citation type="journal article" date="2004" name="J. Biol. Chem.">
        <title>GSK-3 phosphorylation of the Alzheimer epitope within collapsin response mediator proteins regulates axon elongation in primary neurons.</title>
        <authorList>
            <person name="Cole A.R."/>
            <person name="Knebel A."/>
            <person name="Morrice N.A."/>
            <person name="Robertson L.A."/>
            <person name="Irving A.J."/>
            <person name="Connolly C.N."/>
            <person name="Sutherland C."/>
        </authorList>
    </citation>
    <scope>FUNCTION</scope>
    <scope>PHOSPHORYLATION AT SER-522</scope>
</reference>
<reference key="13">
    <citation type="journal article" date="2005" name="Mol. Cell. Biol.">
        <title>CRMP-2 is involved in kinesin-1-dependent transport of the Sra-1/WAVE1 complex and axon formation.</title>
        <authorList>
            <person name="Kawano Y."/>
            <person name="Yoshimura T."/>
            <person name="Tsuboi D."/>
            <person name="Kawabata S."/>
            <person name="Kaneko-Kawano T."/>
            <person name="Shirataki H."/>
            <person name="Takenawa T."/>
            <person name="Kaibuchi K."/>
        </authorList>
    </citation>
    <scope>INTERACTION WITH CYFIP1</scope>
    <scope>MUTAGENESIS OF ASP-71</scope>
</reference>
<reference key="14">
    <citation type="journal article" date="2004" name="EMBO J.">
        <title>Structural bases for CRMP function in plexin-dependent semaphorin3A signaling.</title>
        <authorList>
            <person name="Deo R.C."/>
            <person name="Schmidt E.F."/>
            <person name="Elhabazi A."/>
            <person name="Togashi H."/>
            <person name="Burley S.K."/>
            <person name="Strittmatter S.M."/>
        </authorList>
    </citation>
    <scope>INTERACTION WITH PLEXNA1</scope>
    <scope>SUBUNIT</scope>
</reference>
<reference key="15">
    <citation type="journal article" date="2006" name="Nat. Biotechnol.">
        <title>A probability-based approach for high-throughput protein phosphorylation analysis and site localization.</title>
        <authorList>
            <person name="Beausoleil S.A."/>
            <person name="Villen J."/>
            <person name="Gerber S.A."/>
            <person name="Rush J."/>
            <person name="Gygi S.P."/>
        </authorList>
    </citation>
    <scope>PHOSPHORYLATION [LARGE SCALE ANALYSIS] AT THR-509 AND SER-522</scope>
    <scope>IDENTIFICATION BY MASS SPECTROMETRY [LARGE SCALE ANALYSIS]</scope>
    <source>
        <tissue>Cervix carcinoma</tissue>
    </source>
</reference>
<reference key="16">
    <citation type="journal article" date="2008" name="Proc. Natl. Acad. Sci. U.S.A.">
        <title>A quantitative atlas of mitotic phosphorylation.</title>
        <authorList>
            <person name="Dephoure N."/>
            <person name="Zhou C."/>
            <person name="Villen J."/>
            <person name="Beausoleil S.A."/>
            <person name="Bakalarski C.E."/>
            <person name="Elledge S.J."/>
            <person name="Gygi S.P."/>
        </authorList>
    </citation>
    <scope>PHOSPHORYLATION [LARGE SCALE ANALYSIS] AT THR-509</scope>
    <scope>IDENTIFICATION BY MASS SPECTROMETRY [LARGE SCALE ANALYSIS]</scope>
    <source>
        <tissue>Cervix carcinoma</tissue>
    </source>
</reference>
<reference key="17">
    <citation type="journal article" date="2009" name="Anal. Chem.">
        <title>Lys-N and trypsin cover complementary parts of the phosphoproteome in a refined SCX-based approach.</title>
        <authorList>
            <person name="Gauci S."/>
            <person name="Helbig A.O."/>
            <person name="Slijper M."/>
            <person name="Krijgsveld J."/>
            <person name="Heck A.J."/>
            <person name="Mohammed S."/>
        </authorList>
    </citation>
    <scope>IDENTIFICATION BY MASS SPECTROMETRY [LARGE SCALE ANALYSIS]</scope>
</reference>
<reference key="18">
    <citation type="journal article" date="2009" name="J. Biol. Chem.">
        <title>Semaphorin3A signaling mediated by Fyn-dependent tyrosine phosphorylation of collapsin response mediator protein 2 at tyrosine 32.</title>
        <authorList>
            <person name="Uchida Y."/>
            <person name="Ohshima T."/>
            <person name="Yamashita N."/>
            <person name="Ogawara M."/>
            <person name="Sasaki Y."/>
            <person name="Nakamura F."/>
            <person name="Goshima Y."/>
        </authorList>
    </citation>
    <scope>PHOSPHORYLATION AT TYR-32 BY FYN</scope>
</reference>
<reference key="19">
    <citation type="journal article" date="2009" name="J. Neurosci. Res.">
        <title>Protein product of CLN6 gene responsible for variant late-onset infantile neuronal ceroid lipofuscinosis interacts with CRMP-2.</title>
        <authorList>
            <person name="Benedict J.W."/>
            <person name="Getty A.L."/>
            <person name="Wishart T.M."/>
            <person name="Gillingwater T.H."/>
            <person name="Pearce D.A."/>
        </authorList>
    </citation>
    <scope>INTERACTION WITH CLN6</scope>
</reference>
<reference key="20">
    <citation type="journal article" date="2010" name="J. Biol. Chem.">
        <title>Collapsin response mediator protein-2 (Crmp2) regulates trafficking by linking endocytic regulatory proteins to dynein motors.</title>
        <authorList>
            <person name="Rahajeng J."/>
            <person name="Giridharan S.S."/>
            <person name="Naslavsky N."/>
            <person name="Caplan S."/>
        </authorList>
    </citation>
    <scope>FUNCTION IN ENDOCYTOSIS</scope>
    <scope>INTERACTION WITH MICALL1</scope>
    <scope>SUBCELLULAR LOCATION</scope>
</reference>
<reference key="21">
    <citation type="journal article" date="2010" name="Sci. Signal.">
        <title>Quantitative phosphoproteomics reveals widespread full phosphorylation site occupancy during mitosis.</title>
        <authorList>
            <person name="Olsen J.V."/>
            <person name="Vermeulen M."/>
            <person name="Santamaria A."/>
            <person name="Kumar C."/>
            <person name="Miller M.L."/>
            <person name="Jensen L.J."/>
            <person name="Gnad F."/>
            <person name="Cox J."/>
            <person name="Jensen T.S."/>
            <person name="Nigg E.A."/>
            <person name="Brunak S."/>
            <person name="Mann M."/>
        </authorList>
    </citation>
    <scope>IDENTIFICATION BY MASS SPECTROMETRY [LARGE SCALE ANALYSIS]</scope>
    <source>
        <tissue>Cervix carcinoma</tissue>
    </source>
</reference>
<reference key="22">
    <citation type="journal article" date="2011" name="BMC Syst. Biol.">
        <title>Initial characterization of the human central proteome.</title>
        <authorList>
            <person name="Burkard T.R."/>
            <person name="Planyavsky M."/>
            <person name="Kaupe I."/>
            <person name="Breitwieser F.P."/>
            <person name="Buerckstuemmer T."/>
            <person name="Bennett K.L."/>
            <person name="Superti-Furga G."/>
            <person name="Colinge J."/>
        </authorList>
    </citation>
    <scope>IDENTIFICATION BY MASS SPECTROMETRY [LARGE SCALE ANALYSIS]</scope>
</reference>
<reference key="23">
    <citation type="journal article" date="2011" name="Sci. Signal.">
        <title>System-wide temporal characterization of the proteome and phosphoproteome of human embryonic stem cell differentiation.</title>
        <authorList>
            <person name="Rigbolt K.T."/>
            <person name="Prokhorova T.A."/>
            <person name="Akimov V."/>
            <person name="Henningsen J."/>
            <person name="Johansen P.T."/>
            <person name="Kratchmarova I."/>
            <person name="Kassem M."/>
            <person name="Mann M."/>
            <person name="Olsen J.V."/>
            <person name="Blagoev B."/>
        </authorList>
    </citation>
    <scope>PHOSPHORYLATION [LARGE SCALE ANALYSIS] AT THR-509; THR-514; SER-517; SER-518 AND SER-522</scope>
    <scope>IDENTIFICATION BY MASS SPECTROMETRY [LARGE SCALE ANALYSIS]</scope>
</reference>
<reference key="24">
    <citation type="journal article" date="2012" name="J. Proteome Res.">
        <title>Resveratrol-induced changes of the human adipocyte secretion profile.</title>
        <authorList>
            <person name="Rosenow A."/>
            <person name="Noben J.P."/>
            <person name="Jocken J."/>
            <person name="Kallendrusch S."/>
            <person name="Fischer-Posovszky P."/>
            <person name="Mariman E.C."/>
            <person name="Renes J."/>
        </authorList>
    </citation>
    <scope>IDENTIFICATION BY MASS SPECTROMETRY [LARGE SCALE ANALYSIS]</scope>
</reference>
<reference key="25">
    <citation type="journal article" date="2013" name="J. Proteome Res.">
        <title>Toward a comprehensive characterization of a human cancer cell phosphoproteome.</title>
        <authorList>
            <person name="Zhou H."/>
            <person name="Di Palma S."/>
            <person name="Preisinger C."/>
            <person name="Peng M."/>
            <person name="Polat A.N."/>
            <person name="Heck A.J."/>
            <person name="Mohammed S."/>
        </authorList>
    </citation>
    <scope>PHOSPHORYLATION [LARGE SCALE ANALYSIS] AT THR-509</scope>
    <scope>IDENTIFICATION BY MASS SPECTROMETRY [LARGE SCALE ANALYSIS]</scope>
    <source>
        <tissue>Cervix carcinoma</tissue>
    </source>
</reference>
<reference key="26">
    <citation type="journal article" date="2014" name="J. Proteomics">
        <title>An enzyme assisted RP-RPLC approach for in-depth analysis of human liver phosphoproteome.</title>
        <authorList>
            <person name="Bian Y."/>
            <person name="Song C."/>
            <person name="Cheng K."/>
            <person name="Dong M."/>
            <person name="Wang F."/>
            <person name="Huang J."/>
            <person name="Sun D."/>
            <person name="Wang L."/>
            <person name="Ye M."/>
            <person name="Zou H."/>
        </authorList>
    </citation>
    <scope>IDENTIFICATION BY MASS SPECTROMETRY [LARGE SCALE ANALYSIS]</scope>
    <source>
        <tissue>Liver</tissue>
    </source>
</reference>
<reference key="27">
    <citation type="journal article" date="2015" name="Proteomics">
        <title>N-terminome analysis of the human mitochondrial proteome.</title>
        <authorList>
            <person name="Vaca Jacome A.S."/>
            <person name="Rabilloud T."/>
            <person name="Schaeffer-Reiss C."/>
            <person name="Rompais M."/>
            <person name="Ayoub D."/>
            <person name="Lane L."/>
            <person name="Bairoch A."/>
            <person name="Van Dorsselaer A."/>
            <person name="Carapito C."/>
        </authorList>
    </citation>
    <scope>IDENTIFICATION BY MASS SPECTROMETRY [LARGE SCALE ANALYSIS]</scope>
</reference>
<reference key="28">
    <citation type="journal article" date="2007" name="J. Neurochem.">
        <title>The structure of human collapsin response mediator protein 2, a regulator of axonal growth.</title>
        <authorList>
            <person name="Stenmark P."/>
            <person name="Ogg D."/>
            <person name="Flodin S."/>
            <person name="Flores A."/>
            <person name="Kotenyova T."/>
            <person name="Nyman T."/>
            <person name="Nordlund P."/>
            <person name="Kursula P."/>
        </authorList>
    </citation>
    <scope>X-RAY CRYSTALLOGRAPHY (2.4 ANGSTROMS) OF 12-490</scope>
    <scope>SUBUNIT</scope>
</reference>
<reference key="29">
    <citation type="journal article" date="2006" name="Science">
        <title>The consensus coding sequences of human breast and colorectal cancers.</title>
        <authorList>
            <person name="Sjoeblom T."/>
            <person name="Jones S."/>
            <person name="Wood L.D."/>
            <person name="Parsons D.W."/>
            <person name="Lin J."/>
            <person name="Barber T.D."/>
            <person name="Mandelker D."/>
            <person name="Leary R.J."/>
            <person name="Ptak J."/>
            <person name="Silliman N."/>
            <person name="Szabo S."/>
            <person name="Buckhaults P."/>
            <person name="Farrell C."/>
            <person name="Meeh P."/>
            <person name="Markowitz S.D."/>
            <person name="Willis J."/>
            <person name="Dawson D."/>
            <person name="Willson J.K.V."/>
            <person name="Gazdar A.F."/>
            <person name="Hartigan J."/>
            <person name="Wu L."/>
            <person name="Liu C."/>
            <person name="Parmigiani G."/>
            <person name="Park B.H."/>
            <person name="Bachman K.E."/>
            <person name="Papadopoulos N."/>
            <person name="Vogelstein B."/>
            <person name="Kinzler K.W."/>
            <person name="Velculescu V.E."/>
        </authorList>
    </citation>
    <scope>VARIANT [LARGE SCALE ANALYSIS] CYS-481</scope>
</reference>
<evidence type="ECO:0000250" key="1"/>
<evidence type="ECO:0000250" key="2">
    <source>
        <dbReference type="UniProtKB" id="O02675"/>
    </source>
</evidence>
<evidence type="ECO:0000250" key="3">
    <source>
        <dbReference type="UniProtKB" id="O08553"/>
    </source>
</evidence>
<evidence type="ECO:0000250" key="4">
    <source>
        <dbReference type="UniProtKB" id="P47942"/>
    </source>
</evidence>
<evidence type="ECO:0000256" key="5">
    <source>
        <dbReference type="SAM" id="MobiDB-lite"/>
    </source>
</evidence>
<evidence type="ECO:0000269" key="6">
    <source>
    </source>
</evidence>
<evidence type="ECO:0000269" key="7">
    <source>
    </source>
</evidence>
<evidence type="ECO:0000269" key="8">
    <source>
    </source>
</evidence>
<evidence type="ECO:0000269" key="9">
    <source>
    </source>
</evidence>
<evidence type="ECO:0000269" key="10">
    <source>
    </source>
</evidence>
<evidence type="ECO:0000269" key="11">
    <source>
    </source>
</evidence>
<evidence type="ECO:0000269" key="12">
    <source>
    </source>
</evidence>
<evidence type="ECO:0000269" key="13">
    <source>
    </source>
</evidence>
<evidence type="ECO:0000269" key="14">
    <source>
    </source>
</evidence>
<evidence type="ECO:0000269" key="15">
    <source>
    </source>
</evidence>
<evidence type="ECO:0000303" key="16">
    <source>
    </source>
</evidence>
<evidence type="ECO:0000305" key="17"/>
<evidence type="ECO:0007744" key="18">
    <source>
    </source>
</evidence>
<evidence type="ECO:0007744" key="19">
    <source>
    </source>
</evidence>
<evidence type="ECO:0007744" key="20">
    <source>
    </source>
</evidence>
<evidence type="ECO:0007744" key="21">
    <source>
    </source>
</evidence>
<evidence type="ECO:0007829" key="22">
    <source>
        <dbReference type="PDB" id="2VM8"/>
    </source>
</evidence>
<evidence type="ECO:0007829" key="23">
    <source>
        <dbReference type="PDB" id="5LXX"/>
    </source>
</evidence>
<evidence type="ECO:0007829" key="24">
    <source>
        <dbReference type="PDB" id="8DNM"/>
    </source>
</evidence>
<organism>
    <name type="scientific">Homo sapiens</name>
    <name type="common">Human</name>
    <dbReference type="NCBI Taxonomy" id="9606"/>
    <lineage>
        <taxon>Eukaryota</taxon>
        <taxon>Metazoa</taxon>
        <taxon>Chordata</taxon>
        <taxon>Craniata</taxon>
        <taxon>Vertebrata</taxon>
        <taxon>Euteleostomi</taxon>
        <taxon>Mammalia</taxon>
        <taxon>Eutheria</taxon>
        <taxon>Euarchontoglires</taxon>
        <taxon>Primates</taxon>
        <taxon>Haplorrhini</taxon>
        <taxon>Catarrhini</taxon>
        <taxon>Hominidae</taxon>
        <taxon>Homo</taxon>
    </lineage>
</organism>
<comment type="function">
    <text evidence="7 9 15">Plays a role in neuronal development and polarity, as well as in axon growth and guidance, neuronal growth cone collapse and cell migration. Necessary for signaling by class 3 semaphorins and subsequent remodeling of the cytoskeleton. May play a role in endocytosis.</text>
</comment>
<comment type="subunit">
    <text evidence="8 10 12 13 15">Homotetramer, and heterotetramer with CRMP1, DPYSL3, DPYSL4 or DPYSL5. Interacts through its C-terminus with the C-terminus of CYFIP1/SRA1. Interacts with HTR4. Interacts with CLN6. Interacts with MICALL1.</text>
</comment>
<comment type="interaction">
    <interactant intactId="EBI-1104711">
        <id>Q16555</id>
    </interactant>
    <interactant intactId="EBI-679921">
        <id>Q8NFD5</id>
        <label>ARID1B</label>
    </interactant>
    <organismsDiffer>false</organismsDiffer>
    <experiments>2</experiments>
</comment>
<comment type="interaction">
    <interactant intactId="EBI-1104711">
        <id>Q16555</id>
    </interactant>
    <interactant intactId="EBI-473101">
        <id>Q14194</id>
        <label>CRMP1</label>
    </interactant>
    <organismsDiffer>false</organismsDiffer>
    <experiments>5</experiments>
</comment>
<comment type="interaction">
    <interactant intactId="EBI-1104711">
        <id>Q16555</id>
    </interactant>
    <interactant intactId="EBI-1104711">
        <id>Q16555</id>
        <label>DPYSL2</label>
    </interactant>
    <organismsDiffer>false</organismsDiffer>
    <experiments>7</experiments>
</comment>
<comment type="interaction">
    <interactant intactId="EBI-1104711">
        <id>Q16555</id>
    </interactant>
    <interactant intactId="EBI-1104726">
        <id>Q14195</id>
        <label>DPYSL3</label>
    </interactant>
    <organismsDiffer>false</organismsDiffer>
    <experiments>7</experiments>
</comment>
<comment type="interaction">
    <interactant intactId="EBI-1104711">
        <id>Q16555</id>
    </interactant>
    <interactant intactId="EBI-10232496">
        <id>Q14195-2</id>
        <label>DPYSL3</label>
    </interactant>
    <organismsDiffer>false</organismsDiffer>
    <experiments>10</experiments>
</comment>
<comment type="interaction">
    <interactant intactId="EBI-1104711">
        <id>Q16555</id>
    </interactant>
    <interactant intactId="EBI-10262612">
        <id>Q8IXW6</id>
        <label>DPYSL3</label>
    </interactant>
    <organismsDiffer>false</organismsDiffer>
    <experiments>3</experiments>
</comment>
<comment type="interaction">
    <interactant intactId="EBI-1104711">
        <id>Q16555</id>
    </interactant>
    <interactant intactId="EBI-719542">
        <id>O14531</id>
        <label>DPYSL4</label>
    </interactant>
    <organismsDiffer>false</organismsDiffer>
    <experiments>3</experiments>
</comment>
<comment type="interaction">
    <interactant intactId="EBI-1104711">
        <id>Q16555</id>
    </interactant>
    <interactant intactId="EBI-724653">
        <id>Q9BPU6</id>
        <label>DPYSL5</label>
    </interactant>
    <organismsDiffer>false</organismsDiffer>
    <experiments>17</experiments>
</comment>
<comment type="interaction">
    <interactant intactId="EBI-1104711">
        <id>Q16555</id>
    </interactant>
    <interactant intactId="EBI-739467">
        <id>Q9H8Y8</id>
        <label>GORASP2</label>
    </interactant>
    <organismsDiffer>false</organismsDiffer>
    <experiments>15</experiments>
</comment>
<comment type="interaction">
    <interactant intactId="EBI-1104711">
        <id>Q16555</id>
    </interactant>
    <interactant intactId="EBI-466029">
        <id>P42858</id>
        <label>HTT</label>
    </interactant>
    <organismsDiffer>false</organismsDiffer>
    <experiments>3</experiments>
</comment>
<comment type="interaction">
    <interactant intactId="EBI-1104711">
        <id>Q16555</id>
    </interactant>
    <interactant intactId="EBI-1752330">
        <id>Q9BYB0</id>
        <label>SHANK3</label>
    </interactant>
    <organismsDiffer>false</organismsDiffer>
    <experiments>2</experiments>
</comment>
<comment type="subcellular location">
    <subcellularLocation>
        <location evidence="15">Cytoplasm</location>
        <location evidence="15">Cytosol</location>
    </subcellularLocation>
    <subcellularLocation>
        <location evidence="15">Cytoplasm</location>
        <location evidence="15">Cytoskeleton</location>
    </subcellularLocation>
    <subcellularLocation>
        <location evidence="15">Membrane</location>
    </subcellularLocation>
    <text>Tightly but non-covalently associated with membranes.</text>
</comment>
<comment type="alternative products">
    <event type="alternative splicing"/>
    <isoform>
        <id>Q16555-1</id>
        <name>1</name>
        <sequence type="displayed"/>
    </isoform>
    <isoform>
        <id>Q16555-2</id>
        <name>2</name>
        <sequence type="described" ref="VSP_044941"/>
    </isoform>
</comment>
<comment type="tissue specificity">
    <text>Ubiquitous.</text>
</comment>
<comment type="PTM">
    <text evidence="6 9">3F4, a monoclonal antibody which strongly stains neurofibrillary tangles in Alzheimer disease brains, specifically labels DPYSL2 when phosphorylated on Ser-518, Ser-522 and Thr-509.</text>
</comment>
<comment type="PTM">
    <text evidence="1 6 9">Phosphorylation at Thr-514 by GSK3B abolishes tubulin-binding leading to destabilization of microtubule assembly in axons and neurodegeneration (By similarity). Phosphorylation by DYRK2 at Ser-522 is required for subsequent phosphorylation by GSK3B.</text>
</comment>
<comment type="similarity">
    <text evidence="17">Belongs to the metallo-dependent hydrolases superfamily. Hydantoinase/dihydropyrimidinase family.</text>
</comment>
<comment type="caution">
    <text evidence="17">Lacks most of the conserved residues that are essential for binding the metal cofactor and hence for dihydropyrimidinase activity. Its enzyme activity is therefore unsure.</text>
</comment>
<keyword id="KW-0002">3D-structure</keyword>
<keyword id="KW-0025">Alternative splicing</keyword>
<keyword id="KW-0963">Cytoplasm</keyword>
<keyword id="KW-0206">Cytoskeleton</keyword>
<keyword id="KW-0217">Developmental protein</keyword>
<keyword id="KW-0221">Differentiation</keyword>
<keyword id="KW-0903">Direct protein sequencing</keyword>
<keyword id="KW-0472">Membrane</keyword>
<keyword id="KW-0488">Methylation</keyword>
<keyword id="KW-0524">Neurogenesis</keyword>
<keyword id="KW-0597">Phosphoprotein</keyword>
<keyword id="KW-1267">Proteomics identification</keyword>
<keyword id="KW-1185">Reference proteome</keyword>
<keyword id="KW-0702">S-nitrosylation</keyword>
<protein>
    <recommendedName>
        <fullName>Dihydropyrimidinase-related protein 2</fullName>
        <shortName>DRP-2</shortName>
    </recommendedName>
    <alternativeName>
        <fullName>Collapsin response mediator protein 2</fullName>
        <shortName>CRMP-2</shortName>
    </alternativeName>
    <alternativeName>
        <fullName>N2A3</fullName>
    </alternativeName>
    <alternativeName>
        <fullName>Unc-33-like phosphoprotein 2</fullName>
        <shortName>ULIP-2</shortName>
    </alternativeName>
</protein>
<gene>
    <name type="primary">DPYSL2</name>
    <name type="synonym">CRMP2</name>
    <name type="synonym">ULIP2</name>
</gene>